<keyword id="KW-1203">Blood coagulation cascade inhibiting toxin</keyword>
<keyword id="KW-0903">Direct protein sequencing</keyword>
<keyword id="KW-1015">Disulfide bond</keyword>
<keyword id="KW-1199">Hemostasis impairing toxin</keyword>
<keyword id="KW-0479">Metal-binding</keyword>
<keyword id="KW-0964">Secreted</keyword>
<keyword id="KW-0732">Signal</keyword>
<keyword id="KW-0800">Toxin</keyword>
<organism>
    <name type="scientific">Gloydius brevicauda</name>
    <name type="common">Korean slamosa snake</name>
    <name type="synonym">Agkistrodon halys brevicaudus</name>
    <dbReference type="NCBI Taxonomy" id="3148161"/>
    <lineage>
        <taxon>Eukaryota</taxon>
        <taxon>Metazoa</taxon>
        <taxon>Chordata</taxon>
        <taxon>Craniata</taxon>
        <taxon>Vertebrata</taxon>
        <taxon>Euteleostomi</taxon>
        <taxon>Lepidosauria</taxon>
        <taxon>Squamata</taxon>
        <taxon>Bifurcata</taxon>
        <taxon>Unidentata</taxon>
        <taxon>Episquamata</taxon>
        <taxon>Toxicofera</taxon>
        <taxon>Serpentes</taxon>
        <taxon>Colubroidea</taxon>
        <taxon>Viperidae</taxon>
        <taxon>Crotalinae</taxon>
        <taxon>Gloydius</taxon>
    </lineage>
</organism>
<sequence length="154" mass="17293">MGRFIFVSFGLLVVFLSLSGTGADFFCPSGWGSNNGHCYQAFNQRMTWEDAERFCSAQAKGGHLVSIETRAEADFVAHVVAERIETSFPHVWIGLRDEGKEQQCSSEWSDGSSVSYENWIEAESKTCLGLELDSNYHKWVNVYCGQRNPFVCEA</sequence>
<proteinExistence type="evidence at protein level"/>
<accession>Q9YGN5</accession>
<comment type="function">
    <text evidence="3">Inhibits thrombin-induced fibrinogen clotting and factor Xa-induced prothrombin activation. Binds to thrombin and prothrombin exosites.</text>
</comment>
<comment type="subunit">
    <text evidence="3">Heterodimer of subunits A and B; disulfide-linked.</text>
</comment>
<comment type="subcellular location">
    <subcellularLocation>
        <location>Secreted</location>
    </subcellularLocation>
</comment>
<comment type="tissue specificity">
    <text>Expressed by the venom gland.</text>
</comment>
<comment type="similarity">
    <text evidence="4">Belongs to the snaclec family.</text>
</comment>
<reference key="1">
    <citation type="journal article" date="2000" name="Thromb. Res.">
        <title>Purification and cDNA cloning of salmorin that inhibits fibrinogen clotting.</title>
        <authorList>
            <person name="Koh Y.-S."/>
            <person name="Chung K.-H."/>
            <person name="Kim D.-S."/>
        </authorList>
    </citation>
    <scope>NUCLEOTIDE SEQUENCE [MRNA]</scope>
    <scope>PROTEIN SEQUENCE OF 24-43</scope>
    <scope>FUNCTION</scope>
    <scope>SUBUNIT</scope>
    <source>
        <tissue>Venom</tissue>
        <tissue>Venom gland</tissue>
    </source>
</reference>
<evidence type="ECO:0000250" key="1"/>
<evidence type="ECO:0000255" key="2">
    <source>
        <dbReference type="PROSITE-ProRule" id="PRU00040"/>
    </source>
</evidence>
<evidence type="ECO:0000269" key="3">
    <source>
    </source>
</evidence>
<evidence type="ECO:0000305" key="4"/>
<dbReference type="EMBL" id="AF125309">
    <property type="protein sequence ID" value="AAD18055.1"/>
    <property type="molecule type" value="mRNA"/>
</dbReference>
<dbReference type="SMR" id="Q9YGN5"/>
<dbReference type="GO" id="GO:0005576">
    <property type="term" value="C:extracellular region"/>
    <property type="evidence" value="ECO:0007669"/>
    <property type="project" value="UniProtKB-SubCell"/>
</dbReference>
<dbReference type="GO" id="GO:0046872">
    <property type="term" value="F:metal ion binding"/>
    <property type="evidence" value="ECO:0007669"/>
    <property type="project" value="UniProtKB-KW"/>
</dbReference>
<dbReference type="GO" id="GO:0090729">
    <property type="term" value="F:toxin activity"/>
    <property type="evidence" value="ECO:0007669"/>
    <property type="project" value="UniProtKB-KW"/>
</dbReference>
<dbReference type="FunFam" id="3.10.100.10:FF:000087">
    <property type="entry name" value="Snaclec rhodocetin subunit delta"/>
    <property type="match status" value="1"/>
</dbReference>
<dbReference type="Gene3D" id="3.10.100.10">
    <property type="entry name" value="Mannose-Binding Protein A, subunit A"/>
    <property type="match status" value="1"/>
</dbReference>
<dbReference type="InterPro" id="IPR001304">
    <property type="entry name" value="C-type_lectin-like"/>
</dbReference>
<dbReference type="InterPro" id="IPR016186">
    <property type="entry name" value="C-type_lectin-like/link_sf"/>
</dbReference>
<dbReference type="InterPro" id="IPR050111">
    <property type="entry name" value="C-type_lectin/snaclec_domain"/>
</dbReference>
<dbReference type="InterPro" id="IPR018378">
    <property type="entry name" value="C-type_lectin_CS"/>
</dbReference>
<dbReference type="InterPro" id="IPR016187">
    <property type="entry name" value="CTDL_fold"/>
</dbReference>
<dbReference type="PANTHER" id="PTHR22803">
    <property type="entry name" value="MANNOSE, PHOSPHOLIPASE, LECTIN RECEPTOR RELATED"/>
    <property type="match status" value="1"/>
</dbReference>
<dbReference type="Pfam" id="PF00059">
    <property type="entry name" value="Lectin_C"/>
    <property type="match status" value="1"/>
</dbReference>
<dbReference type="PRINTS" id="PR01504">
    <property type="entry name" value="PNCREATITSAP"/>
</dbReference>
<dbReference type="SMART" id="SM00034">
    <property type="entry name" value="CLECT"/>
    <property type="match status" value="1"/>
</dbReference>
<dbReference type="SUPFAM" id="SSF56436">
    <property type="entry name" value="C-type lectin-like"/>
    <property type="match status" value="1"/>
</dbReference>
<dbReference type="PROSITE" id="PS00615">
    <property type="entry name" value="C_TYPE_LECTIN_1"/>
    <property type="match status" value="1"/>
</dbReference>
<dbReference type="PROSITE" id="PS50041">
    <property type="entry name" value="C_TYPE_LECTIN_2"/>
    <property type="match status" value="1"/>
</dbReference>
<name>SLA_GLOBR</name>
<protein>
    <recommendedName>
        <fullName>Snaclec salmorin subunit A</fullName>
    </recommendedName>
</protein>
<feature type="signal peptide" evidence="3">
    <location>
        <begin position="1"/>
        <end position="23"/>
    </location>
</feature>
<feature type="chain" id="PRO_0000355235" description="Snaclec salmorin subunit A">
    <location>
        <begin position="24"/>
        <end position="154"/>
    </location>
</feature>
<feature type="domain" description="C-type lectin" evidence="2">
    <location>
        <begin position="34"/>
        <end position="153"/>
    </location>
</feature>
<feature type="binding site" evidence="1">
    <location>
        <position position="66"/>
    </location>
    <ligand>
        <name>Ca(2+)</name>
        <dbReference type="ChEBI" id="CHEBI:29108"/>
    </ligand>
</feature>
<feature type="binding site" evidence="1">
    <location>
        <position position="68"/>
    </location>
    <ligand>
        <name>Ca(2+)</name>
        <dbReference type="ChEBI" id="CHEBI:29108"/>
    </ligand>
</feature>
<feature type="binding site" evidence="1">
    <location>
        <position position="72"/>
    </location>
    <ligand>
        <name>Ca(2+)</name>
        <dbReference type="ChEBI" id="CHEBI:29108"/>
    </ligand>
</feature>
<feature type="binding site" evidence="1">
    <location>
        <position position="153"/>
    </location>
    <ligand>
        <name>Ca(2+)</name>
        <dbReference type="ChEBI" id="CHEBI:29108"/>
    </ligand>
</feature>
<feature type="disulfide bond" evidence="2">
    <location>
        <begin position="27"/>
        <end position="38"/>
    </location>
</feature>
<feature type="disulfide bond" evidence="2">
    <location>
        <begin position="55"/>
        <end position="152"/>
    </location>
</feature>
<feature type="disulfide bond" description="Interchain (with C-98 in subunit B)" evidence="2">
    <location>
        <position position="104"/>
    </location>
</feature>
<feature type="disulfide bond" evidence="2">
    <location>
        <begin position="127"/>
        <end position="144"/>
    </location>
</feature>